<sequence length="758" mass="85050">MDNTTNINTNERSSNTDFSSAPNIKGLNSHTQLQFDADSRVFVSDVMAKNSKQLLYAHIYNYLIKNNYWNSAAKFLSEADLPLSRINGSASGGKTSLNASLKQGLMDIASKGDIVSEDGLLPSKMLMDANDTFLLEWWEIFQSLFNGDLESGYQQDHNPLRERIIPILPANSKSNMPSHFSNLPPNVIPPTQNSFPVSEESFRPNGDGSNFNLNDPTNRNVSERFLSRTSGVYDKQNSANFAPDTAINSDIAGQQYATINLHKHFNDLQSPAQPQQSSQQQIQQPQHQPQHQPQQQQQQQQQQQQQQQQQQQQQQQQQQQQQQHQQQQQTPYPIVNPQMVPHIPSENSHSTGLMPSVPPTNQQFNAQTQSSMFSDQQRFFQYQLHHQNQGQAPSFQQSQSGRFDDMNAMKMFFQQQALQQNSLQQNLGNQNYQSNTRNNTAEETTPTNDNNANGNSLLQEHIRARFNKMKTIPQQMKNQSTVANPVVSDITSQQQYMHMMMQRMAANQQLQNSAFPPDTNRIAPANNTMPLQPGNMGSPVIENPGMRQTNPSGQNPMINMQPLYQNVSSAMHAFAPQQQFHLPQHYKTNTSVPQNDSTSVFPLPNNNNNNNNNNNNNNNNNSNNSNNNNNNNNNNNNSNNTPTVSQPSSKCTSSSSTTPNITTTIQPKRKQRVGKTKTKESRKVAAAQKVMKSKKLEQNGDSAATNFINVTPKDSGGKGTVKVQNSNSQQQLNGSFSMDTETFDIFNIGDFSPDLMDS</sequence>
<comment type="function">
    <text evidence="3 4 5 7 8 9 10 11 12 13 14">Transcription factor that regulates pseudohyphal differentiation, invasive growth, floculation, adhesion and starch metabolism in response to nutrient availability.</text>
</comment>
<comment type="subunit">
    <text evidence="8">Interacts with FLO8, STE12 and TEC1.</text>
</comment>
<comment type="subcellular location">
    <subcellularLocation>
        <location evidence="6">Cytoplasm</location>
    </subcellularLocation>
    <subcellularLocation>
        <location evidence="6">Nucleus</location>
    </subcellularLocation>
</comment>
<comment type="similarity">
    <text evidence="15">Belongs to the MSS11 family.</text>
</comment>
<dbReference type="EMBL" id="Z49705">
    <property type="protein sequence ID" value="CAA89800.1"/>
    <property type="molecule type" value="Genomic_DNA"/>
</dbReference>
<dbReference type="EMBL" id="BK006946">
    <property type="protein sequence ID" value="DAA10060.1"/>
    <property type="molecule type" value="Genomic_DNA"/>
</dbReference>
<dbReference type="PIR" id="S54522">
    <property type="entry name" value="S54522"/>
</dbReference>
<dbReference type="RefSeq" id="NP_013887.1">
    <property type="nucleotide sequence ID" value="NM_001182668.1"/>
</dbReference>
<dbReference type="BioGRID" id="35342">
    <property type="interactions" value="80"/>
</dbReference>
<dbReference type="FunCoup" id="Q03825">
    <property type="interactions" value="756"/>
</dbReference>
<dbReference type="IntAct" id="Q03825">
    <property type="interactions" value="3"/>
</dbReference>
<dbReference type="STRING" id="4932.YMR164C"/>
<dbReference type="GlyGen" id="Q03825">
    <property type="glycosylation" value="1 site, 1 O-linked glycan (1 site)"/>
</dbReference>
<dbReference type="iPTMnet" id="Q03825"/>
<dbReference type="PaxDb" id="4932-YMR164C"/>
<dbReference type="PeptideAtlas" id="Q03825"/>
<dbReference type="EnsemblFungi" id="YMR164C_mRNA">
    <property type="protein sequence ID" value="YMR164C"/>
    <property type="gene ID" value="YMR164C"/>
</dbReference>
<dbReference type="GeneID" id="855200"/>
<dbReference type="KEGG" id="sce:YMR164C"/>
<dbReference type="AGR" id="SGD:S000004774"/>
<dbReference type="SGD" id="S000004774">
    <property type="gene designation" value="MSS11"/>
</dbReference>
<dbReference type="VEuPathDB" id="FungiDB:YMR164C"/>
<dbReference type="eggNOG" id="ENOG502S549">
    <property type="taxonomic scope" value="Eukaryota"/>
</dbReference>
<dbReference type="HOGENOM" id="CLU_368109_0_0_1"/>
<dbReference type="InParanoid" id="Q03825"/>
<dbReference type="OMA" id="LLEWWEI"/>
<dbReference type="OrthoDB" id="4036671at2759"/>
<dbReference type="BioCyc" id="YEAST:G3O-32854-MONOMER"/>
<dbReference type="BioGRID-ORCS" id="855200">
    <property type="hits" value="6 hits in 10 CRISPR screens"/>
</dbReference>
<dbReference type="PRO" id="PR:Q03825"/>
<dbReference type="Proteomes" id="UP000002311">
    <property type="component" value="Chromosome XIII"/>
</dbReference>
<dbReference type="RNAct" id="Q03825">
    <property type="molecule type" value="protein"/>
</dbReference>
<dbReference type="GO" id="GO:0005737">
    <property type="term" value="C:cytoplasm"/>
    <property type="evidence" value="ECO:0007669"/>
    <property type="project" value="UniProtKB-SubCell"/>
</dbReference>
<dbReference type="GO" id="GO:0005634">
    <property type="term" value="C:nucleus"/>
    <property type="evidence" value="ECO:0000305"/>
    <property type="project" value="SGD"/>
</dbReference>
<dbReference type="GO" id="GO:1900735">
    <property type="term" value="P:positive regulation of flocculation"/>
    <property type="evidence" value="ECO:0000316"/>
    <property type="project" value="SGD"/>
</dbReference>
<dbReference type="GO" id="GO:2000219">
    <property type="term" value="P:positive regulation of invasive growth in response to glucose limitation"/>
    <property type="evidence" value="ECO:0000314"/>
    <property type="project" value="SGD"/>
</dbReference>
<dbReference type="GO" id="GO:2000222">
    <property type="term" value="P:positive regulation of pseudohyphal growth"/>
    <property type="evidence" value="ECO:0000315"/>
    <property type="project" value="SGD"/>
</dbReference>
<dbReference type="GO" id="GO:2000883">
    <property type="term" value="P:positive regulation of starch catabolic process"/>
    <property type="evidence" value="ECO:0000315"/>
    <property type="project" value="SGD"/>
</dbReference>
<dbReference type="GO" id="GO:0045944">
    <property type="term" value="P:positive regulation of transcription by RNA polymerase II"/>
    <property type="evidence" value="ECO:0000314"/>
    <property type="project" value="SGD"/>
</dbReference>
<dbReference type="InterPro" id="IPR006594">
    <property type="entry name" value="LisH"/>
</dbReference>
<dbReference type="PANTHER" id="PTHR45093:SF2">
    <property type="entry name" value="LISH DOMAIN-CONTAINING PROTEIN"/>
    <property type="match status" value="1"/>
</dbReference>
<dbReference type="PANTHER" id="PTHR45093">
    <property type="entry name" value="TRANSCRIPTION ACTIVATOR MSS11"/>
    <property type="match status" value="1"/>
</dbReference>
<dbReference type="Pfam" id="PF08513">
    <property type="entry name" value="LisH"/>
    <property type="match status" value="1"/>
</dbReference>
<dbReference type="SMART" id="SM00667">
    <property type="entry name" value="LisH"/>
    <property type="match status" value="1"/>
</dbReference>
<dbReference type="PROSITE" id="PS50896">
    <property type="entry name" value="LISH"/>
    <property type="match status" value="1"/>
</dbReference>
<evidence type="ECO:0000255" key="1">
    <source>
        <dbReference type="PROSITE-ProRule" id="PRU00126"/>
    </source>
</evidence>
<evidence type="ECO:0000256" key="2">
    <source>
        <dbReference type="SAM" id="MobiDB-lite"/>
    </source>
</evidence>
<evidence type="ECO:0000269" key="3">
    <source>
    </source>
</evidence>
<evidence type="ECO:0000269" key="4">
    <source>
    </source>
</evidence>
<evidence type="ECO:0000269" key="5">
    <source>
    </source>
</evidence>
<evidence type="ECO:0000269" key="6">
    <source>
    </source>
</evidence>
<evidence type="ECO:0000269" key="7">
    <source>
    </source>
</evidence>
<evidence type="ECO:0000269" key="8">
    <source>
    </source>
</evidence>
<evidence type="ECO:0000269" key="9">
    <source>
    </source>
</evidence>
<evidence type="ECO:0000269" key="10">
    <source>
    </source>
</evidence>
<evidence type="ECO:0000269" key="11">
    <source>
    </source>
</evidence>
<evidence type="ECO:0000269" key="12">
    <source>
    </source>
</evidence>
<evidence type="ECO:0000269" key="13">
    <source>
    </source>
</evidence>
<evidence type="ECO:0000269" key="14">
    <source>
    </source>
</evidence>
<evidence type="ECO:0000305" key="15"/>
<accession>Q03825</accession>
<accession>D6VZY6</accession>
<proteinExistence type="evidence at protein level"/>
<protein>
    <recommendedName>
        <fullName>Transcription activator MSS11</fullName>
    </recommendedName>
    <alternativeName>
        <fullName>Multicopy suppressor of STA genes protein 11</fullName>
    </alternativeName>
</protein>
<keyword id="KW-0010">Activator</keyword>
<keyword id="KW-0963">Cytoplasm</keyword>
<keyword id="KW-0539">Nucleus</keyword>
<keyword id="KW-1185">Reference proteome</keyword>
<keyword id="KW-0804">Transcription</keyword>
<keyword id="KW-0805">Transcription regulation</keyword>
<reference key="1">
    <citation type="journal article" date="1997" name="Curr. Genet.">
        <title>MSS11, a novel yeast gene involved in the regulation of starch metabolism.</title>
        <authorList>
            <person name="Webber A.L."/>
            <person name="Lambrechts M.G."/>
            <person name="Pretorius I.S."/>
        </authorList>
    </citation>
    <scope>NUCLEOTIDE SEQUENCE [GENOMIC DNA]</scope>
    <scope>FUNCTION</scope>
</reference>
<reference key="2">
    <citation type="journal article" date="1997" name="Nature">
        <title>The nucleotide sequence of Saccharomyces cerevisiae chromosome XIII.</title>
        <authorList>
            <person name="Bowman S."/>
            <person name="Churcher C.M."/>
            <person name="Badcock K."/>
            <person name="Brown D."/>
            <person name="Chillingworth T."/>
            <person name="Connor R."/>
            <person name="Dedman K."/>
            <person name="Devlin K."/>
            <person name="Gentles S."/>
            <person name="Hamlin N."/>
            <person name="Hunt S."/>
            <person name="Jagels K."/>
            <person name="Lye G."/>
            <person name="Moule S."/>
            <person name="Odell C."/>
            <person name="Pearson D."/>
            <person name="Rajandream M.A."/>
            <person name="Rice P."/>
            <person name="Skelton J."/>
            <person name="Walsh S.V."/>
            <person name="Whitehead S."/>
            <person name="Barrell B.G."/>
        </authorList>
    </citation>
    <scope>NUCLEOTIDE SEQUENCE [LARGE SCALE GENOMIC DNA]</scope>
    <source>
        <strain>ATCC 204508 / S288c</strain>
    </source>
</reference>
<reference key="3">
    <citation type="journal article" date="2014" name="G3 (Bethesda)">
        <title>The reference genome sequence of Saccharomyces cerevisiae: Then and now.</title>
        <authorList>
            <person name="Engel S.R."/>
            <person name="Dietrich F.S."/>
            <person name="Fisk D.G."/>
            <person name="Binkley G."/>
            <person name="Balakrishnan R."/>
            <person name="Costanzo M.C."/>
            <person name="Dwight S.S."/>
            <person name="Hitz B.C."/>
            <person name="Karra K."/>
            <person name="Nash R.S."/>
            <person name="Weng S."/>
            <person name="Wong E.D."/>
            <person name="Lloyd P."/>
            <person name="Skrzypek M.S."/>
            <person name="Miyasato S.R."/>
            <person name="Simison M."/>
            <person name="Cherry J.M."/>
        </authorList>
    </citation>
    <scope>GENOME REANNOTATION</scope>
    <source>
        <strain>ATCC 204508 / S288c</strain>
    </source>
</reference>
<reference key="4">
    <citation type="journal article" date="1998" name="Genetics">
        <title>Regulators of pseudohyphal differentiation in Saccharomyces cerevisiae identified through multicopy suppressor analysis in ammonium permease mutant strains.</title>
        <authorList>
            <person name="Lorenz M.C."/>
            <person name="Heitman J."/>
        </authorList>
    </citation>
    <scope>FUNCTION</scope>
</reference>
<reference key="5">
    <citation type="journal article" date="1999" name="J. Bacteriol.">
        <title>Divergent regulation of the evolutionarily closely related promoters of the Saccharomyces cerevisiae STA2 and MUC1 genes.</title>
        <authorList>
            <person name="Gagiano M."/>
            <person name="van Dyk D."/>
            <person name="Bauer F.F."/>
            <person name="Lambrechts M.G."/>
            <person name="Pretorius I.S."/>
        </authorList>
    </citation>
    <scope>FUNCTION</scope>
</reference>
<reference key="6">
    <citation type="journal article" date="1999" name="Mol. Microbiol.">
        <title>Msn1p/Mss10p, Mss11p and Muc1p/Flo11p are part of a signal transduction pathway downstream of Mep2p regulating invasive growth and pseudohyphal differentiation in Saccharomyces cerevisiae.</title>
        <authorList>
            <person name="Gagiano M."/>
            <person name="van Dyk D."/>
            <person name="Bauer F.F."/>
            <person name="Lambrechts M.G."/>
            <person name="Pretorius I.S."/>
        </authorList>
    </citation>
    <scope>FUNCTION</scope>
</reference>
<reference key="7">
    <citation type="journal article" date="2003" name="Curr. Genet.">
        <title>STA10 repression of STA gene expression is caused by a defective activator, flo8, in Saccharomyces cerevisiae.</title>
        <authorList>
            <person name="Kim T.S."/>
            <person name="Ahn J.Y."/>
            <person name="Yoon J.H."/>
            <person name="Kang H.S."/>
        </authorList>
    </citation>
    <scope>FUNCTION</scope>
</reference>
<reference key="8">
    <citation type="journal article" date="2003" name="Mol. Microbiol.">
        <title>Mss11p is a transcription factor regulating pseudohyphal differentiation, invasive growth and starch metabolism in Saccharomyces cerevisiae in response to nutrient availability.</title>
        <authorList>
            <person name="Gagiano M."/>
            <person name="Bester M.C."/>
            <person name="van Dyk D."/>
            <person name="Franken J."/>
            <person name="Bauer F.F."/>
            <person name="Pretorius I.S."/>
        </authorList>
    </citation>
    <scope>FUNCTION</scope>
    <scope>MUTAGENESIS OF 133-PHE-LEU-134; 137-TRP-TRP-138; 140-ILE-PHE-141 AND 144-LEU-PHE-145</scope>
</reference>
<reference key="9">
    <citation type="journal article" date="2003" name="Nature">
        <title>Global analysis of protein localization in budding yeast.</title>
        <authorList>
            <person name="Huh W.-K."/>
            <person name="Falvo J.V."/>
            <person name="Gerke L.C."/>
            <person name="Carroll A.S."/>
            <person name="Howson R.W."/>
            <person name="Weissman J.S."/>
            <person name="O'Shea E.K."/>
        </authorList>
    </citation>
    <scope>SUBCELLULAR LOCATION [LARGE SCALE ANALYSIS]</scope>
</reference>
<reference key="10">
    <citation type="journal article" date="2004" name="Mol. Cell. Biol.">
        <title>Recruitment of the Swi/Snf complex by Ste12-Tec1 promotes Flo8-Mss11-mediated activation of STA1 expression.</title>
        <authorList>
            <person name="Kim T.S."/>
            <person name="Kim H.Y."/>
            <person name="Yoon J.H."/>
            <person name="Kang H.S."/>
        </authorList>
    </citation>
    <scope>FUNCTION</scope>
    <scope>DNA-BINDING</scope>
    <scope>INTERACTION WITH FLO8; STE12 AND TEC1</scope>
</reference>
<reference key="11">
    <citation type="journal article" date="2005" name="Genetics">
        <title>Mss11p is a central element of the regulatory network that controls FLO11 expression and invasive growth in Saccharomyces cerevisiae.</title>
        <authorList>
            <person name="van Dyk D."/>
            <person name="Pretorius I.S."/>
            <person name="Bauer F.F."/>
        </authorList>
    </citation>
    <scope>FUNCTION</scope>
</reference>
<reference key="12">
    <citation type="journal article" date="2006" name="Curr. Genet.">
        <title>The regulation of Saccharomyces cerevisiae FLO gene expression and Ca2+ -dependent flocculation by Flo8p and Mss11p.</title>
        <authorList>
            <person name="Bester M.C."/>
            <person name="Pretorius I.S."/>
            <person name="Bauer F.F."/>
        </authorList>
    </citation>
    <scope>FUNCTION</scope>
</reference>
<reference key="13">
    <citation type="journal article" date="2007" name="Mol. Microbiol.">
        <title>Differential Flo8p-dependent regulation of FLO1 and FLO11 for cell-cell and cell-substrate adherence of S.cerevisiae S288c.</title>
        <authorList>
            <person name="Fichtner L."/>
            <person name="Schulze F."/>
            <person name="Braus G.H."/>
        </authorList>
    </citation>
    <scope>FUNCTION</scope>
</reference>
<reference key="14">
    <citation type="journal article" date="2008" name="Genetics">
        <title>Identification of novel activation mechanisms for FLO11 regulation in Saccharomyces cerevisiae.</title>
        <authorList>
            <person name="Barrales R.R."/>
            <person name="Jimenez J."/>
            <person name="Ibeas J.I."/>
        </authorList>
    </citation>
    <scope>FUNCTION</scope>
</reference>
<reference key="15">
    <citation type="journal article" date="2012" name="Proc. Natl. Acad. Sci. U.S.A.">
        <title>N-terminal acetylome analyses and functional insights of the N-terminal acetyltransferase NatB.</title>
        <authorList>
            <person name="Van Damme P."/>
            <person name="Lasa M."/>
            <person name="Polevoda B."/>
            <person name="Gazquez C."/>
            <person name="Elosegui-Artola A."/>
            <person name="Kim D.S."/>
            <person name="De Juan-Pardo E."/>
            <person name="Demeyer K."/>
            <person name="Hole K."/>
            <person name="Larrea E."/>
            <person name="Timmerman E."/>
            <person name="Prieto J."/>
            <person name="Arnesen T."/>
            <person name="Sherman F."/>
            <person name="Gevaert K."/>
            <person name="Aldabe R."/>
        </authorList>
    </citation>
    <scope>IDENTIFICATION BY MASS SPECTROMETRY [LARGE SCALE ANALYSIS]</scope>
</reference>
<name>MSS11_YEAST</name>
<feature type="chain" id="PRO_0000203315" description="Transcription activator MSS11">
    <location>
        <begin position="1"/>
        <end position="758"/>
    </location>
</feature>
<feature type="domain" description="LisH" evidence="1">
    <location>
        <begin position="51"/>
        <end position="83"/>
    </location>
</feature>
<feature type="region of interest" description="Disordered" evidence="2">
    <location>
        <begin position="1"/>
        <end position="23"/>
    </location>
</feature>
<feature type="region of interest" description="Disordered" evidence="2">
    <location>
        <begin position="191"/>
        <end position="220"/>
    </location>
</feature>
<feature type="region of interest" description="Disordered" evidence="2">
    <location>
        <begin position="268"/>
        <end position="299"/>
    </location>
</feature>
<feature type="region of interest" description="Disordered" evidence="2">
    <location>
        <begin position="322"/>
        <end position="355"/>
    </location>
</feature>
<feature type="region of interest" description="Disordered" evidence="2">
    <location>
        <begin position="428"/>
        <end position="454"/>
    </location>
</feature>
<feature type="region of interest" description="Disordered" evidence="2">
    <location>
        <begin position="587"/>
        <end position="681"/>
    </location>
</feature>
<feature type="compositionally biased region" description="Polar residues" evidence="2">
    <location>
        <begin position="207"/>
        <end position="220"/>
    </location>
</feature>
<feature type="compositionally biased region" description="Low complexity" evidence="2">
    <location>
        <begin position="269"/>
        <end position="299"/>
    </location>
</feature>
<feature type="compositionally biased region" description="Polar residues" evidence="2">
    <location>
        <begin position="345"/>
        <end position="355"/>
    </location>
</feature>
<feature type="compositionally biased region" description="Polar residues" evidence="2">
    <location>
        <begin position="436"/>
        <end position="454"/>
    </location>
</feature>
<feature type="compositionally biased region" description="Polar residues" evidence="2">
    <location>
        <begin position="587"/>
        <end position="600"/>
    </location>
</feature>
<feature type="compositionally biased region" description="Low complexity" evidence="2">
    <location>
        <begin position="605"/>
        <end position="664"/>
    </location>
</feature>
<feature type="compositionally biased region" description="Basic residues" evidence="2">
    <location>
        <begin position="667"/>
        <end position="676"/>
    </location>
</feature>
<feature type="mutagenesis site" description="Reduces ability to activate transcription and to induce invasive growth." evidence="4">
    <original>FL</original>
    <variation>GA</variation>
    <location>
        <begin position="133"/>
        <end position="134"/>
    </location>
</feature>
<feature type="mutagenesis site" description="Reduces ability to activate transcription and to induce invasive growth." evidence="4">
    <original>WW</original>
    <variation>GA</variation>
    <location>
        <begin position="137"/>
        <end position="138"/>
    </location>
</feature>
<feature type="mutagenesis site" description="Reduces ability to activate transcription and to induce invasive growth." evidence="4">
    <original>IF</original>
    <variation>GA</variation>
    <location>
        <begin position="140"/>
        <end position="141"/>
    </location>
</feature>
<feature type="mutagenesis site" description="Reduces ability to activate transcription and to induce invasive growth." evidence="4">
    <original>LF</original>
    <variation>GA</variation>
    <location>
        <begin position="144"/>
        <end position="145"/>
    </location>
</feature>
<gene>
    <name type="primary">MSS11</name>
    <name type="ordered locus">YMR164C</name>
    <name type="ORF">YM8520.13C</name>
</gene>
<organism>
    <name type="scientific">Saccharomyces cerevisiae (strain ATCC 204508 / S288c)</name>
    <name type="common">Baker's yeast</name>
    <dbReference type="NCBI Taxonomy" id="559292"/>
    <lineage>
        <taxon>Eukaryota</taxon>
        <taxon>Fungi</taxon>
        <taxon>Dikarya</taxon>
        <taxon>Ascomycota</taxon>
        <taxon>Saccharomycotina</taxon>
        <taxon>Saccharomycetes</taxon>
        <taxon>Saccharomycetales</taxon>
        <taxon>Saccharomycetaceae</taxon>
        <taxon>Saccharomyces</taxon>
    </lineage>
</organism>